<dbReference type="EMBL" id="CU928163">
    <property type="protein sequence ID" value="CAR15401.1"/>
    <property type="molecule type" value="Genomic_DNA"/>
</dbReference>
<dbReference type="RefSeq" id="WP_001251965.1">
    <property type="nucleotide sequence ID" value="NC_011751.1"/>
</dbReference>
<dbReference type="RefSeq" id="YP_002414896.1">
    <property type="nucleotide sequence ID" value="NC_011751.1"/>
</dbReference>
<dbReference type="SMR" id="B7NF47"/>
<dbReference type="STRING" id="585056.ECUMN_4261"/>
<dbReference type="KEGG" id="eum:ECUMN_4261"/>
<dbReference type="PATRIC" id="fig|585056.7.peg.4432"/>
<dbReference type="HOGENOM" id="CLU_084338_2_0_6"/>
<dbReference type="Proteomes" id="UP000007097">
    <property type="component" value="Chromosome"/>
</dbReference>
<dbReference type="GO" id="GO:0005886">
    <property type="term" value="C:plasma membrane"/>
    <property type="evidence" value="ECO:0007669"/>
    <property type="project" value="UniProtKB-SubCell"/>
</dbReference>
<dbReference type="GO" id="GO:0045259">
    <property type="term" value="C:proton-transporting ATP synthase complex"/>
    <property type="evidence" value="ECO:0007669"/>
    <property type="project" value="UniProtKB-KW"/>
</dbReference>
<dbReference type="GO" id="GO:0005524">
    <property type="term" value="F:ATP binding"/>
    <property type="evidence" value="ECO:0007669"/>
    <property type="project" value="UniProtKB-UniRule"/>
</dbReference>
<dbReference type="GO" id="GO:0046933">
    <property type="term" value="F:proton-transporting ATP synthase activity, rotational mechanism"/>
    <property type="evidence" value="ECO:0007669"/>
    <property type="project" value="UniProtKB-UniRule"/>
</dbReference>
<dbReference type="CDD" id="cd12152">
    <property type="entry name" value="F1-ATPase_delta"/>
    <property type="match status" value="1"/>
</dbReference>
<dbReference type="FunFam" id="1.20.5.440:FF:000001">
    <property type="entry name" value="ATP synthase epsilon chain"/>
    <property type="match status" value="1"/>
</dbReference>
<dbReference type="FunFam" id="2.60.15.10:FF:000001">
    <property type="entry name" value="ATP synthase epsilon chain"/>
    <property type="match status" value="1"/>
</dbReference>
<dbReference type="Gene3D" id="1.20.5.440">
    <property type="entry name" value="ATP synthase delta/epsilon subunit, C-terminal domain"/>
    <property type="match status" value="1"/>
</dbReference>
<dbReference type="Gene3D" id="2.60.15.10">
    <property type="entry name" value="F0F1 ATP synthase delta/epsilon subunit, N-terminal"/>
    <property type="match status" value="1"/>
</dbReference>
<dbReference type="HAMAP" id="MF_00530">
    <property type="entry name" value="ATP_synth_epsil_bac"/>
    <property type="match status" value="1"/>
</dbReference>
<dbReference type="InterPro" id="IPR036794">
    <property type="entry name" value="ATP_F1_dsu/esu_C_sf"/>
</dbReference>
<dbReference type="InterPro" id="IPR001469">
    <property type="entry name" value="ATP_synth_F1_dsu/esu"/>
</dbReference>
<dbReference type="InterPro" id="IPR020546">
    <property type="entry name" value="ATP_synth_F1_dsu/esu_N"/>
</dbReference>
<dbReference type="InterPro" id="IPR020547">
    <property type="entry name" value="ATP_synth_F1_esu_C"/>
</dbReference>
<dbReference type="InterPro" id="IPR036771">
    <property type="entry name" value="ATPsynth_dsu/esu_N"/>
</dbReference>
<dbReference type="NCBIfam" id="TIGR01216">
    <property type="entry name" value="ATP_synt_epsi"/>
    <property type="match status" value="1"/>
</dbReference>
<dbReference type="NCBIfam" id="NF001847">
    <property type="entry name" value="PRK00571.1-4"/>
    <property type="match status" value="1"/>
</dbReference>
<dbReference type="PANTHER" id="PTHR13822">
    <property type="entry name" value="ATP SYNTHASE DELTA/EPSILON CHAIN"/>
    <property type="match status" value="1"/>
</dbReference>
<dbReference type="PANTHER" id="PTHR13822:SF10">
    <property type="entry name" value="ATP SYNTHASE EPSILON CHAIN, CHLOROPLASTIC"/>
    <property type="match status" value="1"/>
</dbReference>
<dbReference type="Pfam" id="PF00401">
    <property type="entry name" value="ATP-synt_DE"/>
    <property type="match status" value="1"/>
</dbReference>
<dbReference type="Pfam" id="PF02823">
    <property type="entry name" value="ATP-synt_DE_N"/>
    <property type="match status" value="1"/>
</dbReference>
<dbReference type="SUPFAM" id="SSF46604">
    <property type="entry name" value="Epsilon subunit of F1F0-ATP synthase C-terminal domain"/>
    <property type="match status" value="1"/>
</dbReference>
<dbReference type="SUPFAM" id="SSF51344">
    <property type="entry name" value="Epsilon subunit of F1F0-ATP synthase N-terminal domain"/>
    <property type="match status" value="1"/>
</dbReference>
<gene>
    <name evidence="1" type="primary">atpC</name>
    <name type="ordered locus">ECUMN_4261</name>
</gene>
<evidence type="ECO:0000255" key="1">
    <source>
        <dbReference type="HAMAP-Rule" id="MF_00530"/>
    </source>
</evidence>
<accession>B7NF47</accession>
<organism>
    <name type="scientific">Escherichia coli O17:K52:H18 (strain UMN026 / ExPEC)</name>
    <dbReference type="NCBI Taxonomy" id="585056"/>
    <lineage>
        <taxon>Bacteria</taxon>
        <taxon>Pseudomonadati</taxon>
        <taxon>Pseudomonadota</taxon>
        <taxon>Gammaproteobacteria</taxon>
        <taxon>Enterobacterales</taxon>
        <taxon>Enterobacteriaceae</taxon>
        <taxon>Escherichia</taxon>
    </lineage>
</organism>
<protein>
    <recommendedName>
        <fullName evidence="1">ATP synthase epsilon chain</fullName>
    </recommendedName>
    <alternativeName>
        <fullName evidence="1">ATP synthase F1 sector epsilon subunit</fullName>
    </alternativeName>
    <alternativeName>
        <fullName evidence="1">F-ATPase epsilon subunit</fullName>
    </alternativeName>
</protein>
<name>ATPE_ECOLU</name>
<proteinExistence type="inferred from homology"/>
<comment type="function">
    <text evidence="1">Produces ATP from ADP in the presence of a proton gradient across the membrane.</text>
</comment>
<comment type="subunit">
    <text evidence="1">F-type ATPases have 2 components, CF(1) - the catalytic core - and CF(0) - the membrane proton channel. CF(1) has five subunits: alpha(3), beta(3), gamma(1), delta(1), epsilon(1). CF(0) has three main subunits: a, b and c.</text>
</comment>
<comment type="subcellular location">
    <subcellularLocation>
        <location evidence="1">Cell inner membrane</location>
        <topology evidence="1">Peripheral membrane protein</topology>
    </subcellularLocation>
</comment>
<comment type="similarity">
    <text evidence="1">Belongs to the ATPase epsilon chain family.</text>
</comment>
<keyword id="KW-0066">ATP synthesis</keyword>
<keyword id="KW-0997">Cell inner membrane</keyword>
<keyword id="KW-1003">Cell membrane</keyword>
<keyword id="KW-0139">CF(1)</keyword>
<keyword id="KW-0375">Hydrogen ion transport</keyword>
<keyword id="KW-0406">Ion transport</keyword>
<keyword id="KW-0472">Membrane</keyword>
<keyword id="KW-0813">Transport</keyword>
<feature type="chain" id="PRO_1000127854" description="ATP synthase epsilon chain">
    <location>
        <begin position="1"/>
        <end position="139"/>
    </location>
</feature>
<reference key="1">
    <citation type="journal article" date="2009" name="PLoS Genet.">
        <title>Organised genome dynamics in the Escherichia coli species results in highly diverse adaptive paths.</title>
        <authorList>
            <person name="Touchon M."/>
            <person name="Hoede C."/>
            <person name="Tenaillon O."/>
            <person name="Barbe V."/>
            <person name="Baeriswyl S."/>
            <person name="Bidet P."/>
            <person name="Bingen E."/>
            <person name="Bonacorsi S."/>
            <person name="Bouchier C."/>
            <person name="Bouvet O."/>
            <person name="Calteau A."/>
            <person name="Chiapello H."/>
            <person name="Clermont O."/>
            <person name="Cruveiller S."/>
            <person name="Danchin A."/>
            <person name="Diard M."/>
            <person name="Dossat C."/>
            <person name="Karoui M.E."/>
            <person name="Frapy E."/>
            <person name="Garry L."/>
            <person name="Ghigo J.M."/>
            <person name="Gilles A.M."/>
            <person name="Johnson J."/>
            <person name="Le Bouguenec C."/>
            <person name="Lescat M."/>
            <person name="Mangenot S."/>
            <person name="Martinez-Jehanne V."/>
            <person name="Matic I."/>
            <person name="Nassif X."/>
            <person name="Oztas S."/>
            <person name="Petit M.A."/>
            <person name="Pichon C."/>
            <person name="Rouy Z."/>
            <person name="Ruf C.S."/>
            <person name="Schneider D."/>
            <person name="Tourret J."/>
            <person name="Vacherie B."/>
            <person name="Vallenet D."/>
            <person name="Medigue C."/>
            <person name="Rocha E.P.C."/>
            <person name="Denamur E."/>
        </authorList>
    </citation>
    <scope>NUCLEOTIDE SEQUENCE [LARGE SCALE GENOMIC DNA]</scope>
    <source>
        <strain>UMN026 / ExPEC</strain>
    </source>
</reference>
<sequence>MAMTYHLDVVSAEQQMFSGLVEKIQVTGSEGELGIYPGHAPLLTAIKPGMIRIVKQHGHEEFIYLSGGILEVQPGNVTVLADTAIRGQDLDEARAMEAKRKAEEHISSSHGDVDYAQASAELAKAIAQLRVIELTKKAM</sequence>